<keyword id="KW-0134">Cell wall</keyword>
<keyword id="KW-0349">Heme</keyword>
<keyword id="KW-0408">Iron</keyword>
<keyword id="KW-0479">Metal-binding</keyword>
<keyword id="KW-0572">Peptidoglycan-anchor</keyword>
<keyword id="KW-0677">Repeat</keyword>
<keyword id="KW-0964">Secreted</keyword>
<keyword id="KW-0732">Signal</keyword>
<keyword id="KW-0843">Virulence</keyword>
<gene>
    <name type="primary">isdB</name>
    <name type="synonym">frpB</name>
    <name type="synonym">sasJ</name>
    <name type="synonym">sirH</name>
    <name type="ordered locus">SAB0993c</name>
</gene>
<reference key="1">
    <citation type="journal article" date="2007" name="PLoS ONE">
        <title>Molecular correlates of host specialization in Staphylococcus aureus.</title>
        <authorList>
            <person name="Herron-Olson L."/>
            <person name="Fitzgerald J.R."/>
            <person name="Musser J.M."/>
            <person name="Kapur V."/>
        </authorList>
    </citation>
    <scope>NUCLEOTIDE SEQUENCE [LARGE SCALE GENOMIC DNA]</scope>
    <source>
        <strain>bovine RF122 / ET3-1</strain>
    </source>
</reference>
<name>ISDB_STAAB</name>
<organism>
    <name type="scientific">Staphylococcus aureus (strain bovine RF122 / ET3-1)</name>
    <dbReference type="NCBI Taxonomy" id="273036"/>
    <lineage>
        <taxon>Bacteria</taxon>
        <taxon>Bacillati</taxon>
        <taxon>Bacillota</taxon>
        <taxon>Bacilli</taxon>
        <taxon>Bacillales</taxon>
        <taxon>Staphylococcaceae</taxon>
        <taxon>Staphylococcus</taxon>
    </lineage>
</organism>
<accession>Q2YX96</accession>
<evidence type="ECO:0000250" key="1"/>
<evidence type="ECO:0000250" key="2">
    <source>
        <dbReference type="UniProtKB" id="A6QG30"/>
    </source>
</evidence>
<evidence type="ECO:0000250" key="3">
    <source>
        <dbReference type="UniProtKB" id="Q2FZF0"/>
    </source>
</evidence>
<evidence type="ECO:0000250" key="4">
    <source>
        <dbReference type="UniProtKB" id="Q7A656"/>
    </source>
</evidence>
<evidence type="ECO:0000255" key="5"/>
<evidence type="ECO:0000255" key="6">
    <source>
        <dbReference type="PROSITE-ProRule" id="PRU00337"/>
    </source>
</evidence>
<evidence type="ECO:0000255" key="7">
    <source>
        <dbReference type="PROSITE-ProRule" id="PRU00477"/>
    </source>
</evidence>
<evidence type="ECO:0000256" key="8">
    <source>
        <dbReference type="SAM" id="MobiDB-lite"/>
    </source>
</evidence>
<evidence type="ECO:0000305" key="9"/>
<dbReference type="EMBL" id="AJ938182">
    <property type="protein sequence ID" value="CAI80681.1"/>
    <property type="molecule type" value="Genomic_DNA"/>
</dbReference>
<dbReference type="RefSeq" id="WP_001041593.1">
    <property type="nucleotide sequence ID" value="NC_007622.1"/>
</dbReference>
<dbReference type="SMR" id="Q2YX96"/>
<dbReference type="ABCD" id="Q2YX96">
    <property type="antibodies" value="3 sequenced antibodies"/>
</dbReference>
<dbReference type="KEGG" id="sab:SAB0993c"/>
<dbReference type="HOGENOM" id="CLU_016167_0_0_9"/>
<dbReference type="PRO" id="PR:Q2YX96"/>
<dbReference type="GO" id="GO:0005576">
    <property type="term" value="C:extracellular region"/>
    <property type="evidence" value="ECO:0007669"/>
    <property type="project" value="UniProtKB-KW"/>
</dbReference>
<dbReference type="GO" id="GO:0015232">
    <property type="term" value="F:heme transmembrane transporter activity"/>
    <property type="evidence" value="ECO:0007669"/>
    <property type="project" value="InterPro"/>
</dbReference>
<dbReference type="GO" id="GO:0046872">
    <property type="term" value="F:metal ion binding"/>
    <property type="evidence" value="ECO:0007669"/>
    <property type="project" value="UniProtKB-KW"/>
</dbReference>
<dbReference type="CDD" id="cd06920">
    <property type="entry name" value="NEAT"/>
    <property type="match status" value="1"/>
</dbReference>
<dbReference type="Gene3D" id="1.20.58.1270">
    <property type="match status" value="1"/>
</dbReference>
<dbReference type="Gene3D" id="2.60.40.1850">
    <property type="match status" value="2"/>
</dbReference>
<dbReference type="InterPro" id="IPR019929">
    <property type="entry name" value="Iron-reg_IsdB"/>
</dbReference>
<dbReference type="InterPro" id="IPR048652">
    <property type="entry name" value="Isd_H_B_linker"/>
</dbReference>
<dbReference type="InterPro" id="IPR050436">
    <property type="entry name" value="IsdA"/>
</dbReference>
<dbReference type="InterPro" id="IPR019931">
    <property type="entry name" value="LPXTG_anchor"/>
</dbReference>
<dbReference type="InterPro" id="IPR006635">
    <property type="entry name" value="NEAT_dom"/>
</dbReference>
<dbReference type="InterPro" id="IPR037250">
    <property type="entry name" value="NEAT_dom_sf"/>
</dbReference>
<dbReference type="InterPro" id="IPR005877">
    <property type="entry name" value="YSIRK_signal_dom"/>
</dbReference>
<dbReference type="NCBIfam" id="TIGR03657">
    <property type="entry name" value="IsdB"/>
    <property type="match status" value="1"/>
</dbReference>
<dbReference type="NCBIfam" id="TIGR01167">
    <property type="entry name" value="LPXTG_anchor"/>
    <property type="match status" value="1"/>
</dbReference>
<dbReference type="NCBIfam" id="TIGR01168">
    <property type="entry name" value="YSIRK_signal"/>
    <property type="match status" value="1"/>
</dbReference>
<dbReference type="PANTHER" id="PTHR37824">
    <property type="entry name" value="IRON-REGULATED SURFACE DETERMINANT PROTEIN C"/>
    <property type="match status" value="1"/>
</dbReference>
<dbReference type="PANTHER" id="PTHR37824:SF1">
    <property type="entry name" value="IRON-REGULATED SURFACE DETERMINANT PROTEIN C"/>
    <property type="match status" value="1"/>
</dbReference>
<dbReference type="Pfam" id="PF00746">
    <property type="entry name" value="Gram_pos_anchor"/>
    <property type="match status" value="1"/>
</dbReference>
<dbReference type="Pfam" id="PF20861">
    <property type="entry name" value="Isd_H_B_linker"/>
    <property type="match status" value="1"/>
</dbReference>
<dbReference type="Pfam" id="PF05031">
    <property type="entry name" value="NEAT"/>
    <property type="match status" value="2"/>
</dbReference>
<dbReference type="Pfam" id="PF04650">
    <property type="entry name" value="YSIRK_signal"/>
    <property type="match status" value="1"/>
</dbReference>
<dbReference type="SMART" id="SM00725">
    <property type="entry name" value="NEAT"/>
    <property type="match status" value="2"/>
</dbReference>
<dbReference type="SUPFAM" id="SSF158911">
    <property type="entry name" value="NEAT domain-like"/>
    <property type="match status" value="2"/>
</dbReference>
<dbReference type="PROSITE" id="PS50847">
    <property type="entry name" value="GRAM_POS_ANCHORING"/>
    <property type="match status" value="1"/>
</dbReference>
<dbReference type="PROSITE" id="PS50978">
    <property type="entry name" value="NEAT"/>
    <property type="match status" value="2"/>
</dbReference>
<protein>
    <recommendedName>
        <fullName>Iron-regulated surface determinant protein B</fullName>
    </recommendedName>
    <alternativeName>
        <fullName>Fur-regulated protein B</fullName>
    </alternativeName>
    <alternativeName>
        <fullName>Staphylococcal iron-regulated protein H</fullName>
    </alternativeName>
    <alternativeName>
        <fullName>Staphylococcus aureus surface protein J</fullName>
    </alternativeName>
</protein>
<feature type="signal peptide" evidence="5">
    <location>
        <begin position="1"/>
        <end position="40"/>
    </location>
</feature>
<feature type="chain" id="PRO_0000292565" description="Iron-regulated surface determinant protein B">
    <location>
        <begin position="41"/>
        <end position="597"/>
    </location>
</feature>
<feature type="propeptide" id="PRO_0000292566" description="Removed by sortase A" evidence="7">
    <location>
        <begin position="598"/>
        <end position="629"/>
    </location>
</feature>
<feature type="domain" description="NEAT 1" evidence="6">
    <location>
        <begin position="128"/>
        <end position="253"/>
    </location>
</feature>
<feature type="domain" description="NEAT 2" evidence="6">
    <location>
        <begin position="325"/>
        <end position="442"/>
    </location>
</feature>
<feature type="region of interest" description="Disordered" evidence="8">
    <location>
        <begin position="38"/>
        <end position="104"/>
    </location>
</feature>
<feature type="region of interest" description="Disordered" evidence="8">
    <location>
        <begin position="443"/>
        <end position="605"/>
    </location>
</feature>
<feature type="short sequence motif" description="YSIRK-G/S signaling motif" evidence="3">
    <location>
        <begin position="12"/>
        <end position="23"/>
    </location>
</feature>
<feature type="short sequence motif" description="LPXTG sorting signal" evidence="7">
    <location>
        <begin position="594"/>
        <end position="598"/>
    </location>
</feature>
<feature type="compositionally biased region" description="Basic and acidic residues" evidence="8">
    <location>
        <begin position="83"/>
        <end position="99"/>
    </location>
</feature>
<feature type="compositionally biased region" description="Basic and acidic residues" evidence="8">
    <location>
        <begin position="443"/>
        <end position="460"/>
    </location>
</feature>
<feature type="compositionally biased region" description="Basic and acidic residues" evidence="8">
    <location>
        <begin position="473"/>
        <end position="518"/>
    </location>
</feature>
<feature type="compositionally biased region" description="Low complexity" evidence="8">
    <location>
        <begin position="519"/>
        <end position="532"/>
    </location>
</feature>
<feature type="compositionally biased region" description="Polar residues" evidence="8">
    <location>
        <begin position="533"/>
        <end position="556"/>
    </location>
</feature>
<feature type="compositionally biased region" description="Polar residues" evidence="8">
    <location>
        <begin position="569"/>
        <end position="599"/>
    </location>
</feature>
<feature type="binding site" description="axial binding residue" evidence="4">
    <location>
        <position position="346"/>
    </location>
    <ligand>
        <name>heme</name>
        <dbReference type="ChEBI" id="CHEBI:30413"/>
    </ligand>
    <ligandPart>
        <name>Fe</name>
        <dbReference type="ChEBI" id="CHEBI:18248"/>
    </ligandPart>
</feature>
<feature type="binding site" description="axial binding residue" evidence="4">
    <location>
        <position position="424"/>
    </location>
    <ligand>
        <name>heme</name>
        <dbReference type="ChEBI" id="CHEBI:30413"/>
    </ligand>
    <ligandPart>
        <name>Fe</name>
        <dbReference type="ChEBI" id="CHEBI:18248"/>
    </ligandPart>
</feature>
<feature type="modified residue" description="Pentaglycyl murein peptidoglycan amidated threonine" evidence="7">
    <location>
        <position position="597"/>
    </location>
</feature>
<sequence>MNKQQKEFKSFYSIRKSSLGVASVAISTLLLLMSNGEAQAAEETGGTNTEAQPKTEAVASPSTTTEKAPEAKSVANAVSVSNKEVEAPTSETKEVKPAAKSDNNTYPILNQELREAIKNPAIKDKDHSAPNSRPIDFEMKKENGEQQFYHYASSVKPARVIFTDSKPEIELGLQSGQFWRKFEVYEGDKKLPIKLVSYDTVKDYAYIRFSVSNGTKAVKIVSSTHFNNKEEKYDYTLMEFAQPIYNSADKFKTEEDYKAEKLLAPYKKAKTLERQVYELNKIQDKLPEKLKAEYKKKLEETKKALDEQVKSAITEFQNVQPTNEKMTDLQDTKYVVYESVENNESMMDTFVKHPIKTGMLNGKKYMVMETTNDDYWKDFMVEGQRVRTISKDAKNNTRTIIFPYVEGKTLYDAIVKVHVKTIDYDGQYHVRIVDKEAFTKANADKTNKKEQQDNSAKKETTPATPSKPTTPPVEKESQKQDSQKDDNKQSPSVEKENDASSESGKDKTPATKPAKGEVESSSTTPTKVVSTTQNAAKPTTASSETTKDVVQTSAGSSEAKDSAPLQKANIKNTNDGHTQSENNKNTQENKAKSLPQTGEESNKDMTLPLMSLLALSSIIAFVLPRKRKN</sequence>
<proteinExistence type="inferred from homology"/>
<comment type="function">
    <text evidence="2">Cell wall-anchored surface receptor that extracts heme from oxidized metHb to enable growth on hemoglobin as a sole iron source. Rapidly extracts heme from hemoglobin and transfers it to IsdA or IsdC, which then relays it to the membrane transporter/IsdEF for internalization. Also promotes resistance to hydrogen peroxide and killing by neutrophils.</text>
</comment>
<comment type="subunit">
    <text evidence="2">Interacts with host HBA; this interaction allows heme extraction as iron source. Interacts with IsdA.</text>
</comment>
<comment type="subcellular location">
    <subcellularLocation>
        <location evidence="2">Secreted</location>
        <location evidence="2">Cell wall</location>
        <topology evidence="2">Peptidoglycan-anchor</topology>
    </subcellularLocation>
    <text evidence="2">Anchored to the cell wall by sortase A.</text>
</comment>
<comment type="induction">
    <text evidence="1">Repressed by fur in the presence of iron.</text>
</comment>
<comment type="similarity">
    <text evidence="9">Belongs to the IsdB family.</text>
</comment>